<comment type="function">
    <text evidence="1">Binds directly to 16S ribosomal RNA.</text>
</comment>
<comment type="similarity">
    <text evidence="1">Belongs to the bacterial ribosomal protein bS20 family.</text>
</comment>
<organism>
    <name type="scientific">Streptococcus pneumoniae (strain JJA)</name>
    <dbReference type="NCBI Taxonomy" id="488222"/>
    <lineage>
        <taxon>Bacteria</taxon>
        <taxon>Bacillati</taxon>
        <taxon>Bacillota</taxon>
        <taxon>Bacilli</taxon>
        <taxon>Lactobacillales</taxon>
        <taxon>Streptococcaceae</taxon>
        <taxon>Streptococcus</taxon>
    </lineage>
</organism>
<reference key="1">
    <citation type="journal article" date="2010" name="Genome Biol.">
        <title>Structure and dynamics of the pan-genome of Streptococcus pneumoniae and closely related species.</title>
        <authorList>
            <person name="Donati C."/>
            <person name="Hiller N.L."/>
            <person name="Tettelin H."/>
            <person name="Muzzi A."/>
            <person name="Croucher N.J."/>
            <person name="Angiuoli S.V."/>
            <person name="Oggioni M."/>
            <person name="Dunning Hotopp J.C."/>
            <person name="Hu F.Z."/>
            <person name="Riley D.R."/>
            <person name="Covacci A."/>
            <person name="Mitchell T.J."/>
            <person name="Bentley S.D."/>
            <person name="Kilian M."/>
            <person name="Ehrlich G.D."/>
            <person name="Rappuoli R."/>
            <person name="Moxon E.R."/>
            <person name="Masignani V."/>
        </authorList>
    </citation>
    <scope>NUCLEOTIDE SEQUENCE [LARGE SCALE GENOMIC DNA]</scope>
    <source>
        <strain>JJA</strain>
    </source>
</reference>
<name>RS20_STRZJ</name>
<proteinExistence type="inferred from homology"/>
<keyword id="KW-0687">Ribonucleoprotein</keyword>
<keyword id="KW-0689">Ribosomal protein</keyword>
<keyword id="KW-0694">RNA-binding</keyword>
<keyword id="KW-0699">rRNA-binding</keyword>
<gene>
    <name evidence="1" type="primary">rpsT</name>
    <name type="ordered locus">SPJ_0775</name>
</gene>
<accession>C1CDI5</accession>
<dbReference type="EMBL" id="CP000919">
    <property type="protein sequence ID" value="ACO18199.1"/>
    <property type="molecule type" value="Genomic_DNA"/>
</dbReference>
<dbReference type="RefSeq" id="WP_001274003.1">
    <property type="nucleotide sequence ID" value="NC_012466.1"/>
</dbReference>
<dbReference type="SMR" id="C1CDI5"/>
<dbReference type="KEGG" id="sjj:SPJ_0775"/>
<dbReference type="HOGENOM" id="CLU_160655_1_1_9"/>
<dbReference type="Proteomes" id="UP000002206">
    <property type="component" value="Chromosome"/>
</dbReference>
<dbReference type="GO" id="GO:0005829">
    <property type="term" value="C:cytosol"/>
    <property type="evidence" value="ECO:0007669"/>
    <property type="project" value="TreeGrafter"/>
</dbReference>
<dbReference type="GO" id="GO:0015935">
    <property type="term" value="C:small ribosomal subunit"/>
    <property type="evidence" value="ECO:0007669"/>
    <property type="project" value="TreeGrafter"/>
</dbReference>
<dbReference type="GO" id="GO:0070181">
    <property type="term" value="F:small ribosomal subunit rRNA binding"/>
    <property type="evidence" value="ECO:0007669"/>
    <property type="project" value="TreeGrafter"/>
</dbReference>
<dbReference type="GO" id="GO:0003735">
    <property type="term" value="F:structural constituent of ribosome"/>
    <property type="evidence" value="ECO:0007669"/>
    <property type="project" value="InterPro"/>
</dbReference>
<dbReference type="GO" id="GO:0006412">
    <property type="term" value="P:translation"/>
    <property type="evidence" value="ECO:0007669"/>
    <property type="project" value="UniProtKB-UniRule"/>
</dbReference>
<dbReference type="FunFam" id="1.20.58.110:FF:000001">
    <property type="entry name" value="30S ribosomal protein S20"/>
    <property type="match status" value="1"/>
</dbReference>
<dbReference type="Gene3D" id="1.20.58.110">
    <property type="entry name" value="Ribosomal protein S20"/>
    <property type="match status" value="1"/>
</dbReference>
<dbReference type="HAMAP" id="MF_00500">
    <property type="entry name" value="Ribosomal_bS20"/>
    <property type="match status" value="1"/>
</dbReference>
<dbReference type="InterPro" id="IPR002583">
    <property type="entry name" value="Ribosomal_bS20"/>
</dbReference>
<dbReference type="InterPro" id="IPR036510">
    <property type="entry name" value="Ribosomal_bS20_sf"/>
</dbReference>
<dbReference type="NCBIfam" id="TIGR00029">
    <property type="entry name" value="S20"/>
    <property type="match status" value="1"/>
</dbReference>
<dbReference type="PANTHER" id="PTHR33398">
    <property type="entry name" value="30S RIBOSOMAL PROTEIN S20"/>
    <property type="match status" value="1"/>
</dbReference>
<dbReference type="PANTHER" id="PTHR33398:SF1">
    <property type="entry name" value="SMALL RIBOSOMAL SUBUNIT PROTEIN BS20C"/>
    <property type="match status" value="1"/>
</dbReference>
<dbReference type="Pfam" id="PF01649">
    <property type="entry name" value="Ribosomal_S20p"/>
    <property type="match status" value="1"/>
</dbReference>
<dbReference type="SUPFAM" id="SSF46992">
    <property type="entry name" value="Ribosomal protein S20"/>
    <property type="match status" value="1"/>
</dbReference>
<sequence>MANIKSAIKRAELNVKQNEKNSAQKSAMRTAIKAFEANPSEELFRAASSAIDKAETKGLIHKNKASRDKARLSTKLAK</sequence>
<protein>
    <recommendedName>
        <fullName evidence="1">Small ribosomal subunit protein bS20</fullName>
    </recommendedName>
    <alternativeName>
        <fullName evidence="2">30S ribosomal protein S20</fullName>
    </alternativeName>
</protein>
<feature type="chain" id="PRO_1000194267" description="Small ribosomal subunit protein bS20">
    <location>
        <begin position="1"/>
        <end position="78"/>
    </location>
</feature>
<evidence type="ECO:0000255" key="1">
    <source>
        <dbReference type="HAMAP-Rule" id="MF_00500"/>
    </source>
</evidence>
<evidence type="ECO:0000305" key="2"/>